<accession>Q99X32</accession>
<evidence type="ECO:0000250" key="1">
    <source>
        <dbReference type="UniProtKB" id="Q57071"/>
    </source>
</evidence>
<evidence type="ECO:0000255" key="2">
    <source>
        <dbReference type="PROSITE-ProRule" id="PRU00416"/>
    </source>
</evidence>
<evidence type="ECO:0000255" key="3">
    <source>
        <dbReference type="PROSITE-ProRule" id="PRU00421"/>
    </source>
</evidence>
<evidence type="ECO:0000255" key="4">
    <source>
        <dbReference type="PROSITE-ProRule" id="PRU00426"/>
    </source>
</evidence>
<evidence type="ECO:0000305" key="5"/>
<name>PTG3C_STAAM</name>
<keyword id="KW-1003">Cell membrane</keyword>
<keyword id="KW-0418">Kinase</keyword>
<keyword id="KW-0472">Membrane</keyword>
<keyword id="KW-0598">Phosphotransferase system</keyword>
<keyword id="KW-0762">Sugar transport</keyword>
<keyword id="KW-0808">Transferase</keyword>
<keyword id="KW-0812">Transmembrane</keyword>
<keyword id="KW-1133">Transmembrane helix</keyword>
<keyword id="KW-0813">Transport</keyword>
<protein>
    <recommendedName>
        <fullName evidence="1">PTS system glucose-specific EIICBA component</fullName>
        <ecNumber evidence="1">2.7.1.199</ecNumber>
    </recommendedName>
    <alternativeName>
        <fullName evidence="1">EIICBA-Glc</fullName>
        <shortName evidence="1">EII-Glc</shortName>
    </alternativeName>
    <alternativeName>
        <fullName evidence="5">EIICBA-Glc 1</fullName>
    </alternativeName>
    <domain>
        <recommendedName>
            <fullName evidence="1">Glucose permease IIC component</fullName>
        </recommendedName>
        <alternativeName>
            <fullName evidence="1">PTS system glucose-specific EIIC component</fullName>
        </alternativeName>
    </domain>
    <domain>
        <recommendedName>
            <fullName evidence="1">Glucose-specific phosphotransferase enzyme IIB component</fullName>
        </recommendedName>
        <alternativeName>
            <fullName evidence="1">PTS system glucose-specific EIIB component</fullName>
        </alternativeName>
    </domain>
    <domain>
        <recommendedName>
            <fullName evidence="1">Glucose-specific phosphotransferase enzyme IIA component</fullName>
        </recommendedName>
        <alternativeName>
            <fullName evidence="1">PTS system glucose-specific EIIA component</fullName>
        </alternativeName>
    </domain>
</protein>
<proteinExistence type="inferred from homology"/>
<gene>
    <name type="primary">ptsG</name>
    <name type="synonym">glcA</name>
    <name type="ordered locus">SAV0189</name>
</gene>
<dbReference type="EC" id="2.7.1.199" evidence="1"/>
<dbReference type="EMBL" id="BA000017">
    <property type="protein sequence ID" value="BAB56351.1"/>
    <property type="molecule type" value="Genomic_DNA"/>
</dbReference>
<dbReference type="RefSeq" id="WP_001227709.1">
    <property type="nucleotide sequence ID" value="NC_002758.2"/>
</dbReference>
<dbReference type="SMR" id="Q99X32"/>
<dbReference type="KEGG" id="sav:SAV0189"/>
<dbReference type="HOGENOM" id="CLU_012312_1_1_9"/>
<dbReference type="PhylomeDB" id="Q99X32"/>
<dbReference type="Proteomes" id="UP000002481">
    <property type="component" value="Chromosome"/>
</dbReference>
<dbReference type="GO" id="GO:0005886">
    <property type="term" value="C:plasma membrane"/>
    <property type="evidence" value="ECO:0007669"/>
    <property type="project" value="UniProtKB-SubCell"/>
</dbReference>
<dbReference type="GO" id="GO:0055056">
    <property type="term" value="F:D-glucose transmembrane transporter activity"/>
    <property type="evidence" value="ECO:0007669"/>
    <property type="project" value="InterPro"/>
</dbReference>
<dbReference type="GO" id="GO:0016301">
    <property type="term" value="F:kinase activity"/>
    <property type="evidence" value="ECO:0007669"/>
    <property type="project" value="UniProtKB-KW"/>
</dbReference>
<dbReference type="GO" id="GO:0008982">
    <property type="term" value="F:protein-N(PI)-phosphohistidine-sugar phosphotransferase activity"/>
    <property type="evidence" value="ECO:0007669"/>
    <property type="project" value="InterPro"/>
</dbReference>
<dbReference type="GO" id="GO:0090563">
    <property type="term" value="F:protein-phosphocysteine-sugar phosphotransferase activity"/>
    <property type="evidence" value="ECO:0007669"/>
    <property type="project" value="TreeGrafter"/>
</dbReference>
<dbReference type="GO" id="GO:1904659">
    <property type="term" value="P:D-glucose transmembrane transport"/>
    <property type="evidence" value="ECO:0007669"/>
    <property type="project" value="InterPro"/>
</dbReference>
<dbReference type="GO" id="GO:0009401">
    <property type="term" value="P:phosphoenolpyruvate-dependent sugar phosphotransferase system"/>
    <property type="evidence" value="ECO:0007669"/>
    <property type="project" value="UniProtKB-KW"/>
</dbReference>
<dbReference type="CDD" id="cd00210">
    <property type="entry name" value="PTS_IIA_glc"/>
    <property type="match status" value="1"/>
</dbReference>
<dbReference type="CDD" id="cd00212">
    <property type="entry name" value="PTS_IIB_glc"/>
    <property type="match status" value="1"/>
</dbReference>
<dbReference type="FunFam" id="2.70.70.10:FF:000001">
    <property type="entry name" value="PTS system glucose-specific IIA component"/>
    <property type="match status" value="1"/>
</dbReference>
<dbReference type="FunFam" id="3.30.1360.60:FF:000001">
    <property type="entry name" value="PTS system glucose-specific IIBC component PtsG"/>
    <property type="match status" value="1"/>
</dbReference>
<dbReference type="Gene3D" id="2.70.70.10">
    <property type="entry name" value="Glucose Permease (Domain IIA)"/>
    <property type="match status" value="1"/>
</dbReference>
<dbReference type="Gene3D" id="3.30.1360.60">
    <property type="entry name" value="Glucose permease domain IIB"/>
    <property type="match status" value="1"/>
</dbReference>
<dbReference type="InterPro" id="IPR011055">
    <property type="entry name" value="Dup_hybrid_motif"/>
</dbReference>
<dbReference type="InterPro" id="IPR036878">
    <property type="entry name" value="Glu_permease_IIB"/>
</dbReference>
<dbReference type="InterPro" id="IPR018113">
    <property type="entry name" value="PTrfase_EIIB_Cys"/>
</dbReference>
<dbReference type="InterPro" id="IPR001127">
    <property type="entry name" value="PTS_EIIA_1_perm"/>
</dbReference>
<dbReference type="InterPro" id="IPR003352">
    <property type="entry name" value="PTS_EIIC"/>
</dbReference>
<dbReference type="InterPro" id="IPR013013">
    <property type="entry name" value="PTS_EIIC_1"/>
</dbReference>
<dbReference type="InterPro" id="IPR050429">
    <property type="entry name" value="PTS_Glucose_EIICBA"/>
</dbReference>
<dbReference type="InterPro" id="IPR001996">
    <property type="entry name" value="PTS_IIB_1"/>
</dbReference>
<dbReference type="InterPro" id="IPR011299">
    <property type="entry name" value="PTS_IIBC_glc"/>
</dbReference>
<dbReference type="NCBIfam" id="TIGR00826">
    <property type="entry name" value="EIIB_glc"/>
    <property type="match status" value="1"/>
</dbReference>
<dbReference type="NCBIfam" id="TIGR00830">
    <property type="entry name" value="PTBA"/>
    <property type="match status" value="1"/>
</dbReference>
<dbReference type="NCBIfam" id="TIGR02002">
    <property type="entry name" value="PTS-II-BC-glcB"/>
    <property type="match status" value="1"/>
</dbReference>
<dbReference type="PANTHER" id="PTHR30009">
    <property type="entry name" value="CYTOCHROME C-TYPE SYNTHESIS PROTEIN AND PTS TRANSMEMBRANE COMPONENT"/>
    <property type="match status" value="1"/>
</dbReference>
<dbReference type="PANTHER" id="PTHR30009:SF20">
    <property type="entry name" value="PTS SYSTEM GLUCOSE-SPECIFIC EIICB COMPONENT-RELATED"/>
    <property type="match status" value="1"/>
</dbReference>
<dbReference type="Pfam" id="PF00358">
    <property type="entry name" value="PTS_EIIA_1"/>
    <property type="match status" value="1"/>
</dbReference>
<dbReference type="Pfam" id="PF00367">
    <property type="entry name" value="PTS_EIIB"/>
    <property type="match status" value="1"/>
</dbReference>
<dbReference type="Pfam" id="PF02378">
    <property type="entry name" value="PTS_EIIC"/>
    <property type="match status" value="1"/>
</dbReference>
<dbReference type="SUPFAM" id="SSF51261">
    <property type="entry name" value="Duplicated hybrid motif"/>
    <property type="match status" value="1"/>
</dbReference>
<dbReference type="SUPFAM" id="SSF55604">
    <property type="entry name" value="Glucose permease domain IIB"/>
    <property type="match status" value="1"/>
</dbReference>
<dbReference type="PROSITE" id="PS51093">
    <property type="entry name" value="PTS_EIIA_TYPE_1"/>
    <property type="match status" value="1"/>
</dbReference>
<dbReference type="PROSITE" id="PS00371">
    <property type="entry name" value="PTS_EIIA_TYPE_1_HIS"/>
    <property type="match status" value="1"/>
</dbReference>
<dbReference type="PROSITE" id="PS51098">
    <property type="entry name" value="PTS_EIIB_TYPE_1"/>
    <property type="match status" value="1"/>
</dbReference>
<dbReference type="PROSITE" id="PS01035">
    <property type="entry name" value="PTS_EIIB_TYPE_1_CYS"/>
    <property type="match status" value="1"/>
</dbReference>
<dbReference type="PROSITE" id="PS51103">
    <property type="entry name" value="PTS_EIIC_TYPE_1"/>
    <property type="match status" value="1"/>
</dbReference>
<reference key="1">
    <citation type="journal article" date="2001" name="Lancet">
        <title>Whole genome sequencing of meticillin-resistant Staphylococcus aureus.</title>
        <authorList>
            <person name="Kuroda M."/>
            <person name="Ohta T."/>
            <person name="Uchiyama I."/>
            <person name="Baba T."/>
            <person name="Yuzawa H."/>
            <person name="Kobayashi I."/>
            <person name="Cui L."/>
            <person name="Oguchi A."/>
            <person name="Aoki K."/>
            <person name="Nagai Y."/>
            <person name="Lian J.-Q."/>
            <person name="Ito T."/>
            <person name="Kanamori M."/>
            <person name="Matsumaru H."/>
            <person name="Maruyama A."/>
            <person name="Murakami H."/>
            <person name="Hosoyama A."/>
            <person name="Mizutani-Ui Y."/>
            <person name="Takahashi N.K."/>
            <person name="Sawano T."/>
            <person name="Inoue R."/>
            <person name="Kaito C."/>
            <person name="Sekimizu K."/>
            <person name="Hirakawa H."/>
            <person name="Kuhara S."/>
            <person name="Goto S."/>
            <person name="Yabuzaki J."/>
            <person name="Kanehisa M."/>
            <person name="Yamashita A."/>
            <person name="Oshima K."/>
            <person name="Furuya K."/>
            <person name="Yoshino C."/>
            <person name="Shiba T."/>
            <person name="Hattori M."/>
            <person name="Ogasawara N."/>
            <person name="Hayashi H."/>
            <person name="Hiramatsu K."/>
        </authorList>
    </citation>
    <scope>NUCLEOTIDE SEQUENCE [LARGE SCALE GENOMIC DNA]</scope>
    <source>
        <strain>Mu50 / ATCC 700699</strain>
    </source>
</reference>
<organism>
    <name type="scientific">Staphylococcus aureus (strain Mu50 / ATCC 700699)</name>
    <dbReference type="NCBI Taxonomy" id="158878"/>
    <lineage>
        <taxon>Bacteria</taxon>
        <taxon>Bacillati</taxon>
        <taxon>Bacillota</taxon>
        <taxon>Bacilli</taxon>
        <taxon>Bacillales</taxon>
        <taxon>Staphylococcaceae</taxon>
        <taxon>Staphylococcus</taxon>
    </lineage>
</organism>
<comment type="function">
    <text evidence="1">The phosphoenolpyruvate-dependent sugar phosphotransferase system (sugar PTS), a major carbohydrate active transport system, catalyzes the phosphorylation of incoming sugar substrates concomitantly with their translocation across the cell membrane. This system is involved in glucose transport.</text>
</comment>
<comment type="catalytic activity">
    <reaction evidence="1">
        <text>N(pros)-phospho-L-histidyl-[protein] + D-glucose(out) = D-glucose 6-phosphate(in) + L-histidyl-[protein]</text>
        <dbReference type="Rhea" id="RHEA:33367"/>
        <dbReference type="Rhea" id="RHEA-COMP:9745"/>
        <dbReference type="Rhea" id="RHEA-COMP:9746"/>
        <dbReference type="ChEBI" id="CHEBI:4167"/>
        <dbReference type="ChEBI" id="CHEBI:29979"/>
        <dbReference type="ChEBI" id="CHEBI:61548"/>
        <dbReference type="ChEBI" id="CHEBI:64837"/>
        <dbReference type="EC" id="2.7.1.199"/>
    </reaction>
</comment>
<comment type="subcellular location">
    <subcellularLocation>
        <location evidence="4">Cell membrane</location>
        <topology evidence="4">Multi-pass membrane protein</topology>
    </subcellularLocation>
</comment>
<comment type="domain">
    <text evidence="4">The EIIC domain forms the PTS system translocation channel and contains the specific substrate-binding site.</text>
</comment>
<comment type="domain">
    <text evidence="3">The EIIB domain is phosphorylated by phospho-EIIA on a cysteinyl or histidyl residue, depending on the transported sugar. Then, it transfers the phosphoryl group to the sugar substrate concomitantly with the sugar uptake processed by the EIIC domain.</text>
</comment>
<comment type="domain">
    <text evidence="2">The EIIA domain is phosphorylated by phospho-HPr on a histidyl residue. Then, it transfers the phosphoryl group to the EIIB domain.</text>
</comment>
<sequence length="681" mass="73958">MRKKLFGQLQRIGKALMLPVAILPAAGLLLAIGTAIQGEALQHYLPFIQNGGVQNVAKLMTAAGSIIFENLPMIFALGVAIGLAGGDGVAAIAAFVGYIIMNKTMGDFLQVTPKNVTDPASGYASILGIPTLQTGVFGGIIIGALAAWCYNKFYNINLPSYLGFFAGKRFVPIMMATTSFILAFPMALIWPTIQSGLNAFSTGLLDSNTGVAVFLFGFIKRLLIPFGLHHIFHAPFWFEFGSWKNAAGEIIHGDQRIFIEQIREGAHLTAGKFMQGEFPVMMFGLPAAALAIYHTAKPENKKVVAGLMGSAALTSFLTGITEPLEFSFLFVAPLLFFIHAVLDGLSFLTLYLLDVHLGYTFSGGFIDYVLLGVLPNKTQWWLVIPVGLVYAVIYYFVFRFLIVKLKYKTPGREDKQSQAVTASATELPYAVLEAMGGKANIKHLDACITRLRVEVNDKSKVDVPGLKDLGASGVLEVGNNMQAIFGPKSDQIKHEMQQIMNGQVVENPTTMEDDKDETVVVAEDKSATSELSHIVHAPLTGEVTPLSEVPDQVFSEKMMGDGIAIKPSQGEVRAPFNGKIQMIFPTKHAIGLVSDSGLELLIHIGLDTVKLNGEGFTLHVEEGQEVKQGDLLINFDLDYIRNHAKSDITPIIVTQGNITNLDFKQGEHGNISFGDQLFEAK</sequence>
<feature type="chain" id="PRO_0000351395" description="PTS system glucose-specific EIICBA component">
    <location>
        <begin position="1"/>
        <end position="681"/>
    </location>
</feature>
<feature type="transmembrane region" description="Helical" evidence="4">
    <location>
        <begin position="16"/>
        <end position="36"/>
    </location>
</feature>
<feature type="transmembrane region" description="Helical" evidence="4">
    <location>
        <begin position="73"/>
        <end position="93"/>
    </location>
</feature>
<feature type="transmembrane region" description="Helical" evidence="4">
    <location>
        <begin position="126"/>
        <end position="146"/>
    </location>
</feature>
<feature type="transmembrane region" description="Helical" evidence="4">
    <location>
        <begin position="170"/>
        <end position="190"/>
    </location>
</feature>
<feature type="transmembrane region" description="Helical" evidence="4">
    <location>
        <begin position="199"/>
        <end position="219"/>
    </location>
</feature>
<feature type="transmembrane region" description="Helical" evidence="4">
    <location>
        <begin position="273"/>
        <end position="293"/>
    </location>
</feature>
<feature type="transmembrane region" description="Helical" evidence="4">
    <location>
        <begin position="303"/>
        <end position="323"/>
    </location>
</feature>
<feature type="transmembrane region" description="Helical" evidence="4">
    <location>
        <begin position="328"/>
        <end position="348"/>
    </location>
</feature>
<feature type="transmembrane region" description="Helical" evidence="4">
    <location>
        <begin position="355"/>
        <end position="375"/>
    </location>
</feature>
<feature type="transmembrane region" description="Helical" evidence="4">
    <location>
        <begin position="383"/>
        <end position="403"/>
    </location>
</feature>
<feature type="domain" description="PTS EIIC type-1" evidence="4">
    <location>
        <begin position="3"/>
        <end position="414"/>
    </location>
</feature>
<feature type="domain" description="PTS EIIB type-1" evidence="3">
    <location>
        <begin position="425"/>
        <end position="506"/>
    </location>
</feature>
<feature type="domain" description="PTS EIIA type-1" evidence="2">
    <location>
        <begin position="551"/>
        <end position="655"/>
    </location>
</feature>
<feature type="active site" description="Phosphocysteine intermediate; for EIIB activity" evidence="3">
    <location>
        <position position="447"/>
    </location>
</feature>
<feature type="active site" description="Tele-phosphohistidine intermediate; for EIIA activity" evidence="2">
    <location>
        <position position="603"/>
    </location>
</feature>